<comment type="function">
    <text evidence="1">E3 ubiquitin-protein ligase that mediates ubiquitination and subsequent proteasomal degradation of target proteins. E3 ubiquitin ligases accept ubiquitin from an E2 ubiquitin-conjugating enzyme in the form of a thioester and then directly transfers the ubiquitin to targeted substrates. It probably triggers the ubiquitin-mediated degradation of different substrates.</text>
</comment>
<comment type="catalytic activity">
    <reaction>
        <text>S-ubiquitinyl-[E2 ubiquitin-conjugating enzyme]-L-cysteine + [acceptor protein]-L-lysine = [E2 ubiquitin-conjugating enzyme]-L-cysteine + N(6)-ubiquitinyl-[acceptor protein]-L-lysine.</text>
        <dbReference type="EC" id="2.3.2.27"/>
    </reaction>
</comment>
<comment type="pathway">
    <text evidence="1">Protein modification; protein ubiquitination.</text>
</comment>
<comment type="subunit">
    <text evidence="1">Interacts with tir-1.</text>
</comment>
<comment type="domain">
    <text evidence="2">The RING-type zinc finger domain is essential for ubiquitin ligase activity.</text>
</comment>
<comment type="domain">
    <text evidence="2">The SBD domain (substrate-binding domain) mediates the homodimerization and the interaction with substrate proteins. It is related to the TRAF family.</text>
</comment>
<comment type="similarity">
    <text evidence="4">Belongs to the SINA (Seven in absentia) family.</text>
</comment>
<proteinExistence type="inferred from homology"/>
<dbReference type="EC" id="2.3.2.27"/>
<dbReference type="EMBL" id="HE601100">
    <property type="protein sequence ID" value="CAP28140.2"/>
    <property type="molecule type" value="Genomic_DNA"/>
</dbReference>
<dbReference type="SMR" id="A8X679"/>
<dbReference type="FunCoup" id="A8X679">
    <property type="interactions" value="2133"/>
</dbReference>
<dbReference type="STRING" id="6238.A8X679"/>
<dbReference type="WormBase" id="CBG08288a">
    <property type="protein sequence ID" value="CBP42226"/>
    <property type="gene ID" value="WBGene00030107"/>
    <property type="gene designation" value="Cbr-siah-1"/>
</dbReference>
<dbReference type="eggNOG" id="KOG3002">
    <property type="taxonomic scope" value="Eukaryota"/>
</dbReference>
<dbReference type="HOGENOM" id="CLU_028215_4_0_1"/>
<dbReference type="InParanoid" id="A8X679"/>
<dbReference type="OMA" id="GSGKYGM"/>
<dbReference type="UniPathway" id="UPA00143"/>
<dbReference type="Proteomes" id="UP000008549">
    <property type="component" value="Unassembled WGS sequence"/>
</dbReference>
<dbReference type="GO" id="GO:0005737">
    <property type="term" value="C:cytoplasm"/>
    <property type="evidence" value="ECO:0000318"/>
    <property type="project" value="GO_Central"/>
</dbReference>
<dbReference type="GO" id="GO:0031624">
    <property type="term" value="F:ubiquitin conjugating enzyme binding"/>
    <property type="evidence" value="ECO:0000318"/>
    <property type="project" value="GO_Central"/>
</dbReference>
<dbReference type="GO" id="GO:0061630">
    <property type="term" value="F:ubiquitin protein ligase activity"/>
    <property type="evidence" value="ECO:0000318"/>
    <property type="project" value="GO_Central"/>
</dbReference>
<dbReference type="GO" id="GO:0008270">
    <property type="term" value="F:zinc ion binding"/>
    <property type="evidence" value="ECO:0007669"/>
    <property type="project" value="UniProtKB-KW"/>
</dbReference>
<dbReference type="GO" id="GO:0043161">
    <property type="term" value="P:proteasome-mediated ubiquitin-dependent protein catabolic process"/>
    <property type="evidence" value="ECO:0000318"/>
    <property type="project" value="GO_Central"/>
</dbReference>
<dbReference type="GO" id="GO:0016567">
    <property type="term" value="P:protein ubiquitination"/>
    <property type="evidence" value="ECO:0007669"/>
    <property type="project" value="UniProtKB-UniPathway"/>
</dbReference>
<dbReference type="CDD" id="cd16751">
    <property type="entry name" value="RING-HC_SIAH1"/>
    <property type="match status" value="1"/>
</dbReference>
<dbReference type="CDD" id="cd03829">
    <property type="entry name" value="Sina"/>
    <property type="match status" value="1"/>
</dbReference>
<dbReference type="FunFam" id="2.60.210.10:FF:000002">
    <property type="entry name" value="E3 ubiquitin-protein ligase"/>
    <property type="match status" value="1"/>
</dbReference>
<dbReference type="FunFam" id="3.30.40.10:FF:000050">
    <property type="entry name" value="E3 ubiquitin-protein ligase"/>
    <property type="match status" value="1"/>
</dbReference>
<dbReference type="FunFam" id="3.30.40.10:FF:000652">
    <property type="entry name" value="E3 ubiquitin-protein ligase"/>
    <property type="match status" value="1"/>
</dbReference>
<dbReference type="Gene3D" id="2.60.210.10">
    <property type="entry name" value="Apoptosis, Tumor Necrosis Factor Receptor Associated Protein 2, Chain A"/>
    <property type="match status" value="1"/>
</dbReference>
<dbReference type="Gene3D" id="3.30.40.10">
    <property type="entry name" value="Zinc/RING finger domain, C3HC4 (zinc finger)"/>
    <property type="match status" value="2"/>
</dbReference>
<dbReference type="InterPro" id="IPR018121">
    <property type="entry name" value="7-in-absentia-prot_TRAF-dom"/>
</dbReference>
<dbReference type="InterPro" id="IPR004162">
    <property type="entry name" value="SINA-like_animal"/>
</dbReference>
<dbReference type="InterPro" id="IPR049548">
    <property type="entry name" value="Sina-like_RING"/>
</dbReference>
<dbReference type="InterPro" id="IPR008974">
    <property type="entry name" value="TRAF-like"/>
</dbReference>
<dbReference type="InterPro" id="IPR001841">
    <property type="entry name" value="Znf_RING"/>
</dbReference>
<dbReference type="InterPro" id="IPR013083">
    <property type="entry name" value="Znf_RING/FYVE/PHD"/>
</dbReference>
<dbReference type="InterPro" id="IPR013010">
    <property type="entry name" value="Znf_SIAH"/>
</dbReference>
<dbReference type="PANTHER" id="PTHR45877">
    <property type="entry name" value="E3 UBIQUITIN-PROTEIN LIGASE SIAH2"/>
    <property type="match status" value="1"/>
</dbReference>
<dbReference type="PANTHER" id="PTHR45877:SF2">
    <property type="entry name" value="E3 UBIQUITIN-PROTEIN LIGASE SINA-RELATED"/>
    <property type="match status" value="1"/>
</dbReference>
<dbReference type="Pfam" id="PF21362">
    <property type="entry name" value="Sina_RING"/>
    <property type="match status" value="1"/>
</dbReference>
<dbReference type="Pfam" id="PF03145">
    <property type="entry name" value="Sina_TRAF"/>
    <property type="match status" value="1"/>
</dbReference>
<dbReference type="Pfam" id="PF21361">
    <property type="entry name" value="Sina_ZnF"/>
    <property type="match status" value="1"/>
</dbReference>
<dbReference type="SUPFAM" id="SSF57850">
    <property type="entry name" value="RING/U-box"/>
    <property type="match status" value="1"/>
</dbReference>
<dbReference type="SUPFAM" id="SSF49599">
    <property type="entry name" value="TRAF domain-like"/>
    <property type="match status" value="1"/>
</dbReference>
<dbReference type="PROSITE" id="PS50089">
    <property type="entry name" value="ZF_RING_2"/>
    <property type="match status" value="1"/>
</dbReference>
<dbReference type="PROSITE" id="PS51081">
    <property type="entry name" value="ZF_SIAH"/>
    <property type="match status" value="1"/>
</dbReference>
<accession>A8X679</accession>
<reference evidence="9" key="1">
    <citation type="journal article" date="2003" name="PLoS Biol.">
        <title>The genome sequence of Caenorhabditis briggsae: a platform for comparative genomics.</title>
        <authorList>
            <person name="Stein L.D."/>
            <person name="Bao Z."/>
            <person name="Blasiar D."/>
            <person name="Blumenthal T."/>
            <person name="Brent M.R."/>
            <person name="Chen N."/>
            <person name="Chinwalla A."/>
            <person name="Clarke L."/>
            <person name="Clee C."/>
            <person name="Coghlan A."/>
            <person name="Coulson A."/>
            <person name="D'Eustachio P."/>
            <person name="Fitch D.H.A."/>
            <person name="Fulton L.A."/>
            <person name="Fulton R.E."/>
            <person name="Griffiths-Jones S."/>
            <person name="Harris T.W."/>
            <person name="Hillier L.W."/>
            <person name="Kamath R."/>
            <person name="Kuwabara P.E."/>
            <person name="Mardis E.R."/>
            <person name="Marra M.A."/>
            <person name="Miner T.L."/>
            <person name="Minx P."/>
            <person name="Mullikin J.C."/>
            <person name="Plumb R.W."/>
            <person name="Rogers J."/>
            <person name="Schein J.E."/>
            <person name="Sohrmann M."/>
            <person name="Spieth J."/>
            <person name="Stajich J.E."/>
            <person name="Wei C."/>
            <person name="Willey D."/>
            <person name="Wilson R.K."/>
            <person name="Durbin R.M."/>
            <person name="Waterston R.H."/>
        </authorList>
    </citation>
    <scope>NUCLEOTIDE SEQUENCE [LARGE SCALE GENOMIC DNA]</scope>
    <source>
        <strain>AF16</strain>
    </source>
</reference>
<feature type="chain" id="PRO_0000394290" description="E3 ubiquitin-protein ligase siah-1">
    <location>
        <begin position="1"/>
        <end position="434"/>
    </location>
</feature>
<feature type="zinc finger region" description="RING-type; degenerate" evidence="5">
    <location>
        <begin position="171"/>
        <end position="206"/>
    </location>
</feature>
<feature type="zinc finger region" description="SIAH-type; degenerate" evidence="6">
    <location>
        <begin position="223"/>
        <end position="283"/>
    </location>
</feature>
<feature type="region of interest" description="Disordered" evidence="7">
    <location>
        <begin position="27"/>
        <end position="88"/>
    </location>
</feature>
<feature type="region of interest" description="SBD" evidence="1">
    <location>
        <begin position="220"/>
        <end position="415"/>
    </location>
</feature>
<feature type="compositionally biased region" description="Low complexity" evidence="7">
    <location>
        <begin position="43"/>
        <end position="55"/>
    </location>
</feature>
<feature type="compositionally biased region" description="Polar residues" evidence="7">
    <location>
        <begin position="74"/>
        <end position="88"/>
    </location>
</feature>
<feature type="binding site" evidence="1">
    <location>
        <position position="228"/>
    </location>
    <ligand>
        <name>Zn(2+)</name>
        <dbReference type="ChEBI" id="CHEBI:29105"/>
        <label>1</label>
    </ligand>
</feature>
<feature type="binding site" evidence="1">
    <location>
        <position position="235"/>
    </location>
    <ligand>
        <name>Zn(2+)</name>
        <dbReference type="ChEBI" id="CHEBI:29105"/>
        <label>1</label>
    </ligand>
</feature>
<feature type="binding site" evidence="1">
    <location>
        <position position="247"/>
    </location>
    <ligand>
        <name>Zn(2+)</name>
        <dbReference type="ChEBI" id="CHEBI:29105"/>
        <label>1</label>
    </ligand>
</feature>
<feature type="binding site" evidence="1">
    <location>
        <position position="251"/>
    </location>
    <ligand>
        <name>Zn(2+)</name>
        <dbReference type="ChEBI" id="CHEBI:29105"/>
        <label>1</label>
    </ligand>
</feature>
<feature type="binding site" evidence="1">
    <location>
        <position position="258"/>
    </location>
    <ligand>
        <name>Zn(2+)</name>
        <dbReference type="ChEBI" id="CHEBI:29105"/>
        <label>2</label>
    </ligand>
</feature>
<feature type="binding site" evidence="1">
    <location>
        <position position="265"/>
    </location>
    <ligand>
        <name>Zn(2+)</name>
        <dbReference type="ChEBI" id="CHEBI:29105"/>
        <label>2</label>
    </ligand>
</feature>
<feature type="binding site" evidence="1">
    <location>
        <position position="277"/>
    </location>
    <ligand>
        <name>Zn(2+)</name>
        <dbReference type="ChEBI" id="CHEBI:29105"/>
        <label>2</label>
    </ligand>
</feature>
<feature type="binding site" evidence="1">
    <location>
        <position position="282"/>
    </location>
    <ligand>
        <name>Zn(2+)</name>
        <dbReference type="ChEBI" id="CHEBI:29105"/>
        <label>2</label>
    </ligand>
</feature>
<keyword id="KW-0479">Metal-binding</keyword>
<keyword id="KW-1185">Reference proteome</keyword>
<keyword id="KW-0808">Transferase</keyword>
<keyword id="KW-0833">Ubl conjugation pathway</keyword>
<keyword id="KW-0862">Zinc</keyword>
<keyword id="KW-0863">Zinc-finger</keyword>
<protein>
    <recommendedName>
        <fullName evidence="3">E3 ubiquitin-protein ligase siah-1</fullName>
        <ecNumber>2.3.2.27</ecNumber>
    </recommendedName>
    <alternativeName>
        <fullName evidence="8">RING-type E3 ubiquitin transferase SIAH1</fullName>
    </alternativeName>
    <alternativeName>
        <fullName evidence="3">Seven in absentia homolog 1</fullName>
    </alternativeName>
</protein>
<organism>
    <name type="scientific">Caenorhabditis briggsae</name>
    <dbReference type="NCBI Taxonomy" id="6238"/>
    <lineage>
        <taxon>Eukaryota</taxon>
        <taxon>Metazoa</taxon>
        <taxon>Ecdysozoa</taxon>
        <taxon>Nematoda</taxon>
        <taxon>Chromadorea</taxon>
        <taxon>Rhabditida</taxon>
        <taxon>Rhabditina</taxon>
        <taxon>Rhabditomorpha</taxon>
        <taxon>Rhabditoidea</taxon>
        <taxon>Rhabditidae</taxon>
        <taxon>Peloderinae</taxon>
        <taxon>Caenorhabditis</taxon>
    </lineage>
</organism>
<name>SIAH1_CAEBR</name>
<sequence>MSNRKGGGGAGDYQEVIESLRRSQLIFEEDENAGPEIPTVVTSSSSASSQRSSASQHHRLNNMVVGGGGRDNEMSNNQNGNTPSVTIPSQCQVMTPRISSPSSVMAPSVTVTSGTVQQGKTFARIQGSSPSNTTHSTPTVAQAMQSVAPHIPIVGAGADDSSAEILSVFECPVCLEYMLPPYMQCPSGHLVCSNCRPKLQCCPTCRGPTPSVRNLGLEKIANTVRFPCKFSNSGCPLNFHHIDKMDHEELCEYRPYSCPCPGASCKWQGALADVMDHLKKVHKSITTLQGEDIVFLATDINLPGAVDWVMMQSCFDYNFMLVLEKQEKYDPAQSTQMFYAVVQLIGSKKEADNFVYRLELSANRRRMSWEATPRSIHEGVAFAIQQSDCLAFDTSAAQLFAENGNLGINVTISRIDGQQRRHPNESDAVDVEYD</sequence>
<evidence type="ECO:0000250" key="1">
    <source>
        <dbReference type="UniProtKB" id="P61092"/>
    </source>
</evidence>
<evidence type="ECO:0000250" key="2">
    <source>
        <dbReference type="UniProtKB" id="Q8IUQ4"/>
    </source>
</evidence>
<evidence type="ECO:0000250" key="3">
    <source>
        <dbReference type="UniProtKB" id="Q965X6"/>
    </source>
</evidence>
<evidence type="ECO:0000255" key="4"/>
<evidence type="ECO:0000255" key="5">
    <source>
        <dbReference type="PROSITE-ProRule" id="PRU00175"/>
    </source>
</evidence>
<evidence type="ECO:0000255" key="6">
    <source>
        <dbReference type="PROSITE-ProRule" id="PRU00455"/>
    </source>
</evidence>
<evidence type="ECO:0000256" key="7">
    <source>
        <dbReference type="SAM" id="MobiDB-lite"/>
    </source>
</evidence>
<evidence type="ECO:0000305" key="8"/>
<evidence type="ECO:0000312" key="9">
    <source>
        <dbReference type="EMBL" id="CAP28140.2"/>
    </source>
</evidence>
<gene>
    <name evidence="9" type="primary">siah-1</name>
    <name type="ORF">CBG08288</name>
</gene>